<gene>
    <name evidence="5" type="primary">DBB1</name>
    <name evidence="8" type="ordered locus">Os05g0592400</name>
    <name evidence="5" type="ordered locus">LOC_Os05g51480</name>
    <name evidence="9" type="ORF">OsJ_19757</name>
    <name evidence="7" type="ORF">P0663C08.8</name>
</gene>
<dbReference type="EMBL" id="AB037144">
    <property type="protein sequence ID" value="BAB20761.1"/>
    <property type="molecule type" value="mRNA"/>
</dbReference>
<dbReference type="EMBL" id="AC130728">
    <property type="protein sequence ID" value="AAT44300.1"/>
    <property type="molecule type" value="Genomic_DNA"/>
</dbReference>
<dbReference type="EMBL" id="AP008211">
    <property type="protein sequence ID" value="BAF18409.1"/>
    <property type="molecule type" value="Genomic_DNA"/>
</dbReference>
<dbReference type="EMBL" id="AP014961">
    <property type="protein sequence ID" value="BAS95638.1"/>
    <property type="molecule type" value="Genomic_DNA"/>
</dbReference>
<dbReference type="EMBL" id="CM000142">
    <property type="protein sequence ID" value="EEE64898.1"/>
    <property type="molecule type" value="Genomic_DNA"/>
</dbReference>
<dbReference type="EMBL" id="AK065508">
    <property type="protein sequence ID" value="BAG89545.1"/>
    <property type="molecule type" value="mRNA"/>
</dbReference>
<dbReference type="RefSeq" id="NP_001389582.1">
    <property type="nucleotide sequence ID" value="NM_001402653.1"/>
</dbReference>
<dbReference type="RefSeq" id="XP_015639287.1">
    <property type="nucleotide sequence ID" value="XM_015783801.1"/>
</dbReference>
<dbReference type="SMR" id="Q6L4S0"/>
<dbReference type="FunCoup" id="Q6L4S0">
    <property type="interactions" value="3525"/>
</dbReference>
<dbReference type="STRING" id="39947.Q6L4S0"/>
<dbReference type="PaxDb" id="39947-Q6L4S0"/>
<dbReference type="EnsemblPlants" id="Os05t0592400-01">
    <property type="protein sequence ID" value="Os05t0592400-01"/>
    <property type="gene ID" value="Os05g0592400"/>
</dbReference>
<dbReference type="GeneID" id="4339794"/>
<dbReference type="Gramene" id="Os05t0592400-01">
    <property type="protein sequence ID" value="Os05t0592400-01"/>
    <property type="gene ID" value="Os05g0592400"/>
</dbReference>
<dbReference type="KEGG" id="dosa:Os05g0592400"/>
<dbReference type="eggNOG" id="KOG1897">
    <property type="taxonomic scope" value="Eukaryota"/>
</dbReference>
<dbReference type="HOGENOM" id="CLU_002893_0_1_1"/>
<dbReference type="InParanoid" id="Q6L4S0"/>
<dbReference type="OMA" id="HQDFLMR"/>
<dbReference type="OrthoDB" id="433457at2759"/>
<dbReference type="Proteomes" id="UP000000763">
    <property type="component" value="Chromosome 5"/>
</dbReference>
<dbReference type="Proteomes" id="UP000007752">
    <property type="component" value="Chromosome 5"/>
</dbReference>
<dbReference type="Proteomes" id="UP000059680">
    <property type="component" value="Chromosome 5"/>
</dbReference>
<dbReference type="ExpressionAtlas" id="Q6L4S0">
    <property type="expression patterns" value="baseline and differential"/>
</dbReference>
<dbReference type="GO" id="GO:0005634">
    <property type="term" value="C:nucleus"/>
    <property type="evidence" value="ECO:0000314"/>
    <property type="project" value="UniProtKB"/>
</dbReference>
<dbReference type="GO" id="GO:0003684">
    <property type="term" value="F:damaged DNA binding"/>
    <property type="evidence" value="ECO:0000314"/>
    <property type="project" value="UniProtKB"/>
</dbReference>
<dbReference type="GO" id="GO:0006281">
    <property type="term" value="P:DNA repair"/>
    <property type="evidence" value="ECO:0007669"/>
    <property type="project" value="UniProtKB-KW"/>
</dbReference>
<dbReference type="FunFam" id="2.130.10.10:FF:000070">
    <property type="entry name" value="DNA damage-binding protein 1"/>
    <property type="match status" value="1"/>
</dbReference>
<dbReference type="FunFam" id="1.10.150.910:FF:000003">
    <property type="entry name" value="DNA damage-binding protein 1a"/>
    <property type="match status" value="1"/>
</dbReference>
<dbReference type="FunFam" id="2.130.10.10:FF:000182">
    <property type="entry name" value="DNA damage-binding protein 1a"/>
    <property type="match status" value="1"/>
</dbReference>
<dbReference type="FunFam" id="2.130.10.10:FF:000267">
    <property type="entry name" value="DNA damage-binding protein 1a"/>
    <property type="match status" value="1"/>
</dbReference>
<dbReference type="Gene3D" id="1.10.150.910">
    <property type="match status" value="1"/>
</dbReference>
<dbReference type="Gene3D" id="2.130.10.10">
    <property type="entry name" value="YVTN repeat-like/Quinoprotein amine dehydrogenase"/>
    <property type="match status" value="3"/>
</dbReference>
<dbReference type="InterPro" id="IPR018846">
    <property type="entry name" value="Beta-prop_RSE1/DDB1/CPSF1_1st"/>
</dbReference>
<dbReference type="InterPro" id="IPR004871">
    <property type="entry name" value="Cleavage/polyA-sp_fac_asu_C"/>
</dbReference>
<dbReference type="InterPro" id="IPR011047">
    <property type="entry name" value="Quinoprotein_ADH-like_sf"/>
</dbReference>
<dbReference type="InterPro" id="IPR050358">
    <property type="entry name" value="RSE1/DDB1/CFT1/CPSF1"/>
</dbReference>
<dbReference type="InterPro" id="IPR015943">
    <property type="entry name" value="WD40/YVTN_repeat-like_dom_sf"/>
</dbReference>
<dbReference type="PANTHER" id="PTHR10644">
    <property type="entry name" value="DNA REPAIR/RNA PROCESSING CPSF FAMILY"/>
    <property type="match status" value="1"/>
</dbReference>
<dbReference type="Pfam" id="PF10433">
    <property type="entry name" value="Beta-prop_RSE1_1st"/>
    <property type="match status" value="1"/>
</dbReference>
<dbReference type="Pfam" id="PF23726">
    <property type="entry name" value="Beta-prop_RSE1_2nd"/>
    <property type="match status" value="1"/>
</dbReference>
<dbReference type="Pfam" id="PF03178">
    <property type="entry name" value="CPSF_A"/>
    <property type="match status" value="1"/>
</dbReference>
<dbReference type="SUPFAM" id="SSF50998">
    <property type="entry name" value="Quinoprotein alcohol dehydrogenase-like"/>
    <property type="match status" value="1"/>
</dbReference>
<evidence type="ECO:0000250" key="1">
    <source>
        <dbReference type="UniProtKB" id="Q16531"/>
    </source>
</evidence>
<evidence type="ECO:0000269" key="2">
    <source>
    </source>
</evidence>
<evidence type="ECO:0000269" key="3">
    <source>
    </source>
</evidence>
<evidence type="ECO:0000303" key="4">
    <source>
    </source>
</evidence>
<evidence type="ECO:0000305" key="5"/>
<evidence type="ECO:0000305" key="6">
    <source>
    </source>
</evidence>
<evidence type="ECO:0000312" key="7">
    <source>
        <dbReference type="EMBL" id="AAT44300.1"/>
    </source>
</evidence>
<evidence type="ECO:0000312" key="8">
    <source>
        <dbReference type="EMBL" id="BAF18409.1"/>
    </source>
</evidence>
<evidence type="ECO:0000312" key="9">
    <source>
        <dbReference type="EMBL" id="EEE64898.1"/>
    </source>
</evidence>
<protein>
    <recommendedName>
        <fullName evidence="5">DNA damage-binding protein 1</fullName>
    </recommendedName>
    <alternativeName>
        <fullName evidence="5">UV-damaged DNA-binding protein 1</fullName>
        <shortName evidence="4">OsUV-DDB1</shortName>
    </alternativeName>
</protein>
<sequence>MSVWNYVVTAHKPTSVTHSCVGNFTGPNQLNLIVAKCTRIEIHLLTPQGLQPMIDVPIYGRIATLELFRPHNETQDFLFIATERYKFCVLQWDGEKSELLTRAMGDVSDRIGRPTDNGQIGIIDPDCRLIGLHLYDGLFKVIPFDNKGQLKEAFNIRLEELQVLDIKFLYGCVKPTIVVLYQDNKDARHVKTYEVALKDKDFVEGPWSQNNLDNGAGLLIPVPAPLGGVIIIGEETIVYCNANSTFRAIPIKQSIIRAYGRVDPDGSRYLLGDNAGILHLLVLTHERERVTGLKIEYLGETSIASSISYLDNGVVYVGSRFGDSQLVKLNLQADPNGSYVEVLERYVNLGPIVDFCVVDLDRQGQGQVVTCSGAFKDGSLRVVRNGIGINEQASVELQGIKGLWSLKSSFNDPYDMYLVVSFISETRFLAMNMEDELEETEIEGFDAQTQTLFCQNAINDLLIQVTANSVRLVSCTSRELVDQWNAPEGFSVNVASANASQVLLATGGGHLVYLEIKDSKLVEVKHIQLEHEISCVDLNPIGENPQYSSLAAVGMWTDISVRILSLPDLELIRKENLGGEIVPRSVLLCTLEGVSYLLCALGDGHLFSFLLNASTGELTDRKKVSLGTQPISLRTFSSKGTTHVFASSDRPTVIYSSNKKLLYSNVNLKEVNHMCPFNTAAIPDSLAIAKEGELSIGTIDDIQKLHIRTIPLNEQARRICHQEQSRTLAFCSFKHNQTSIEESETHFVRLLDHQTFEFLSIYQLDQYEHGCSIISCSFSDDNNVYYCVGTAYVLPEENEPSKGRILVFAVEDGRLQLIVEKETKGAVYSLNAFNGKLLAAINQKIQLYKWMLREDGSHELQSECGHHGHILALYTQTRGDFIVVGDLMKSISLLVYKHEESAIEELARDYNANWMSAVEMLDDEIYIGAENNYNIFTVRKNSDAATDEERGRLEVVGEYHLGEFVNRLRHGSLVMRLPDSEMGQIPTVIFGTINGVIGIIASLPHEQYVFLEKLQSTLVKFIKGVGNLSHEQWRSFHNDKKTSEARNFLDGDLIESFLDLSRNKMEEVAKGMGVPVEELSKRVEELTRLH</sequence>
<name>DDB1_ORYSJ</name>
<keyword id="KW-0227">DNA damage</keyword>
<keyword id="KW-0234">DNA repair</keyword>
<keyword id="KW-0238">DNA-binding</keyword>
<keyword id="KW-0539">Nucleus</keyword>
<keyword id="KW-1185">Reference proteome</keyword>
<keyword id="KW-0833">Ubl conjugation pathway</keyword>
<proteinExistence type="evidence at protein level"/>
<comment type="function">
    <text evidence="1 6">Required for DNA repair. Binds to DDB2 to form the UV-damaged DNA-binding protein complex (the UV-DDB complex). The UV-DDB complex may recognize UV-induced DNA damage and recruit proteins of the nucleotide excision repair pathway (the NER pathway) to initiate DNA repair (Probable). May function as the substrate recognition module for a DCX (DDB1-CUL4-X-box) E3 ubiquitin-protein ligase complex (By similarity).</text>
</comment>
<comment type="subunit">
    <text evidence="2">Component of the UV-DDB complex, which is composed of DDB1 and DDB2.</text>
</comment>
<comment type="subcellular location">
    <subcellularLocation>
        <location evidence="5">Nucleus</location>
    </subcellularLocation>
</comment>
<comment type="tissue specificity">
    <text evidence="2 3">Expressed in proliferating tissues. Highly expressed in shoot apical meristem (SAM). Expressed in roots, young leaves, flag leaves, and panicles. Not detected in mature leaves.</text>
</comment>
<comment type="similarity">
    <text evidence="5">Belongs to the DDB1 family.</text>
</comment>
<accession>Q6L4S0</accession>
<accession>Q9FS08</accession>
<feature type="chain" id="PRO_0000438214" description="DNA damage-binding protein 1">
    <location>
        <begin position="1"/>
        <end position="1090"/>
    </location>
</feature>
<feature type="sequence conflict" description="In Ref. 1; BAB20761." evidence="5" ref="1">
    <original>L</original>
    <variation>F</variation>
    <location>
        <position position="566"/>
    </location>
</feature>
<feature type="sequence conflict" description="In Ref. 1; BAB20761." evidence="5" ref="1">
    <original>NEQA</original>
    <variation>DHQT</variation>
    <location>
        <begin position="713"/>
        <end position="716"/>
    </location>
</feature>
<feature type="sequence conflict" description="In Ref. 1; BAB20761." evidence="5" ref="1">
    <original>VNRL</original>
    <variation>GNRF</variation>
    <location>
        <begin position="965"/>
        <end position="968"/>
    </location>
</feature>
<organism>
    <name type="scientific">Oryza sativa subsp. japonica</name>
    <name type="common">Rice</name>
    <dbReference type="NCBI Taxonomy" id="39947"/>
    <lineage>
        <taxon>Eukaryota</taxon>
        <taxon>Viridiplantae</taxon>
        <taxon>Streptophyta</taxon>
        <taxon>Embryophyta</taxon>
        <taxon>Tracheophyta</taxon>
        <taxon>Spermatophyta</taxon>
        <taxon>Magnoliopsida</taxon>
        <taxon>Liliopsida</taxon>
        <taxon>Poales</taxon>
        <taxon>Poaceae</taxon>
        <taxon>BOP clade</taxon>
        <taxon>Oryzoideae</taxon>
        <taxon>Oryzeae</taxon>
        <taxon>Oryzinae</taxon>
        <taxon>Oryza</taxon>
        <taxon>Oryza sativa</taxon>
    </lineage>
</organism>
<reference key="1">
    <citation type="journal article" date="2003" name="Gene">
        <title>Rice UV-damaged DNA binding protein homologues are most abundant in proliferating tissues.</title>
        <authorList>
            <person name="Ishibashi T."/>
            <person name="Kimura S."/>
            <person name="Yamamoto T."/>
            <person name="Furukawa T."/>
            <person name="Takata K."/>
            <person name="Uchiyama Y."/>
            <person name="Hashimoto J."/>
            <person name="Sakaguchi K."/>
        </authorList>
    </citation>
    <scope>NUCLEOTIDE SEQUENCE [MRNA]</scope>
    <scope>FUNCTION</scope>
    <scope>SUBCELLULAR LOCATION</scope>
    <scope>INTERACTION WITH DDB2</scope>
    <source>
        <strain>cv. Nipponbare</strain>
    </source>
</reference>
<reference key="2">
    <citation type="journal article" date="2005" name="Mol. Genet. Genomics">
        <title>A fine physical map of the rice chromosome 5.</title>
        <authorList>
            <person name="Cheng C.-H."/>
            <person name="Chung M.C."/>
            <person name="Liu S.-M."/>
            <person name="Chen S.-K."/>
            <person name="Kao F.Y."/>
            <person name="Lin S.-J."/>
            <person name="Hsiao S.-H."/>
            <person name="Tseng I.C."/>
            <person name="Hsing Y.-I.C."/>
            <person name="Wu H.-P."/>
            <person name="Chen C.-S."/>
            <person name="Shaw J.-F."/>
            <person name="Wu J."/>
            <person name="Matsumoto T."/>
            <person name="Sasaki T."/>
            <person name="Chen H.-C."/>
            <person name="Chow T.-Y."/>
        </authorList>
    </citation>
    <scope>NUCLEOTIDE SEQUENCE [LARGE SCALE GENOMIC DNA]</scope>
    <source>
        <strain>cv. Nipponbare</strain>
    </source>
</reference>
<reference key="3">
    <citation type="journal article" date="2005" name="Nature">
        <title>The map-based sequence of the rice genome.</title>
        <authorList>
            <consortium name="International rice genome sequencing project (IRGSP)"/>
        </authorList>
    </citation>
    <scope>NUCLEOTIDE SEQUENCE [LARGE SCALE GENOMIC DNA]</scope>
    <source>
        <strain>cv. Nipponbare</strain>
    </source>
</reference>
<reference key="4">
    <citation type="journal article" date="2008" name="Nucleic Acids Res.">
        <title>The rice annotation project database (RAP-DB): 2008 update.</title>
        <authorList>
            <consortium name="The rice annotation project (RAP)"/>
        </authorList>
    </citation>
    <scope>GENOME REANNOTATION</scope>
    <source>
        <strain>cv. Nipponbare</strain>
    </source>
</reference>
<reference key="5">
    <citation type="journal article" date="2013" name="Rice">
        <title>Improvement of the Oryza sativa Nipponbare reference genome using next generation sequence and optical map data.</title>
        <authorList>
            <person name="Kawahara Y."/>
            <person name="de la Bastide M."/>
            <person name="Hamilton J.P."/>
            <person name="Kanamori H."/>
            <person name="McCombie W.R."/>
            <person name="Ouyang S."/>
            <person name="Schwartz D.C."/>
            <person name="Tanaka T."/>
            <person name="Wu J."/>
            <person name="Zhou S."/>
            <person name="Childs K.L."/>
            <person name="Davidson R.M."/>
            <person name="Lin H."/>
            <person name="Quesada-Ocampo L."/>
            <person name="Vaillancourt B."/>
            <person name="Sakai H."/>
            <person name="Lee S.S."/>
            <person name="Kim J."/>
            <person name="Numa H."/>
            <person name="Itoh T."/>
            <person name="Buell C.R."/>
            <person name="Matsumoto T."/>
        </authorList>
    </citation>
    <scope>GENOME REANNOTATION</scope>
    <source>
        <strain>cv. Nipponbare</strain>
    </source>
</reference>
<reference key="6">
    <citation type="journal article" date="2005" name="PLoS Biol.">
        <title>The genomes of Oryza sativa: a history of duplications.</title>
        <authorList>
            <person name="Yu J."/>
            <person name="Wang J."/>
            <person name="Lin W."/>
            <person name="Li S."/>
            <person name="Li H."/>
            <person name="Zhou J."/>
            <person name="Ni P."/>
            <person name="Dong W."/>
            <person name="Hu S."/>
            <person name="Zeng C."/>
            <person name="Zhang J."/>
            <person name="Zhang Y."/>
            <person name="Li R."/>
            <person name="Xu Z."/>
            <person name="Li S."/>
            <person name="Li X."/>
            <person name="Zheng H."/>
            <person name="Cong L."/>
            <person name="Lin L."/>
            <person name="Yin J."/>
            <person name="Geng J."/>
            <person name="Li G."/>
            <person name="Shi J."/>
            <person name="Liu J."/>
            <person name="Lv H."/>
            <person name="Li J."/>
            <person name="Wang J."/>
            <person name="Deng Y."/>
            <person name="Ran L."/>
            <person name="Shi X."/>
            <person name="Wang X."/>
            <person name="Wu Q."/>
            <person name="Li C."/>
            <person name="Ren X."/>
            <person name="Wang J."/>
            <person name="Wang X."/>
            <person name="Li D."/>
            <person name="Liu D."/>
            <person name="Zhang X."/>
            <person name="Ji Z."/>
            <person name="Zhao W."/>
            <person name="Sun Y."/>
            <person name="Zhang Z."/>
            <person name="Bao J."/>
            <person name="Han Y."/>
            <person name="Dong L."/>
            <person name="Ji J."/>
            <person name="Chen P."/>
            <person name="Wu S."/>
            <person name="Liu J."/>
            <person name="Xiao Y."/>
            <person name="Bu D."/>
            <person name="Tan J."/>
            <person name="Yang L."/>
            <person name="Ye C."/>
            <person name="Zhang J."/>
            <person name="Xu J."/>
            <person name="Zhou Y."/>
            <person name="Yu Y."/>
            <person name="Zhang B."/>
            <person name="Zhuang S."/>
            <person name="Wei H."/>
            <person name="Liu B."/>
            <person name="Lei M."/>
            <person name="Yu H."/>
            <person name="Li Y."/>
            <person name="Xu H."/>
            <person name="Wei S."/>
            <person name="He X."/>
            <person name="Fang L."/>
            <person name="Zhang Z."/>
            <person name="Zhang Y."/>
            <person name="Huang X."/>
            <person name="Su Z."/>
            <person name="Tong W."/>
            <person name="Li J."/>
            <person name="Tong Z."/>
            <person name="Li S."/>
            <person name="Ye J."/>
            <person name="Wang L."/>
            <person name="Fang L."/>
            <person name="Lei T."/>
            <person name="Chen C.-S."/>
            <person name="Chen H.-C."/>
            <person name="Xu Z."/>
            <person name="Li H."/>
            <person name="Huang H."/>
            <person name="Zhang F."/>
            <person name="Xu H."/>
            <person name="Li N."/>
            <person name="Zhao C."/>
            <person name="Li S."/>
            <person name="Dong L."/>
            <person name="Huang Y."/>
            <person name="Li L."/>
            <person name="Xi Y."/>
            <person name="Qi Q."/>
            <person name="Li W."/>
            <person name="Zhang B."/>
            <person name="Hu W."/>
            <person name="Zhang Y."/>
            <person name="Tian X."/>
            <person name="Jiao Y."/>
            <person name="Liang X."/>
            <person name="Jin J."/>
            <person name="Gao L."/>
            <person name="Zheng W."/>
            <person name="Hao B."/>
            <person name="Liu S.-M."/>
            <person name="Wang W."/>
            <person name="Yuan L."/>
            <person name="Cao M."/>
            <person name="McDermott J."/>
            <person name="Samudrala R."/>
            <person name="Wang J."/>
            <person name="Wong G.K.-S."/>
            <person name="Yang H."/>
        </authorList>
    </citation>
    <scope>NUCLEOTIDE SEQUENCE [LARGE SCALE GENOMIC DNA]</scope>
    <source>
        <strain>cv. Nipponbare</strain>
    </source>
</reference>
<reference key="7">
    <citation type="journal article" date="2003" name="Science">
        <title>Collection, mapping, and annotation of over 28,000 cDNA clones from japonica rice.</title>
        <authorList>
            <consortium name="The rice full-length cDNA consortium"/>
        </authorList>
    </citation>
    <scope>NUCLEOTIDE SEQUENCE [LARGE SCALE MRNA]</scope>
    <source>
        <strain>cv. Nipponbare</strain>
    </source>
</reference>
<reference key="8">
    <citation type="journal article" date="2004" name="Nucleic Acids Res.">
        <title>DNA repair in higher plants; photoreactivation is the major DNA repair pathway in non-proliferating cells while excision repair (nucleotide excision repair and base excision repair) is active in proliferating cells.</title>
        <authorList>
            <person name="Kimura S."/>
            <person name="Tahira Y."/>
            <person name="Ishibashi T."/>
            <person name="Mori Y."/>
            <person name="Mori T."/>
            <person name="Hashimoto J."/>
            <person name="Sakaguchi K."/>
        </authorList>
    </citation>
    <scope>TISSUE SPECIFICITY</scope>
</reference>